<feature type="chain" id="PRO_0000002097" description="Arginine biosynthesis bifunctional protein ArgJ alpha chain 1" evidence="1">
    <location>
        <begin position="1"/>
        <end position="190"/>
    </location>
</feature>
<feature type="chain" id="PRO_0000002098" description="Arginine biosynthesis bifunctional protein ArgJ beta chain 1" evidence="1">
    <location>
        <begin position="191"/>
        <end position="413"/>
    </location>
</feature>
<feature type="active site" description="Nucleophile" evidence="1">
    <location>
        <position position="191"/>
    </location>
</feature>
<feature type="binding site" evidence="1">
    <location>
        <position position="154"/>
    </location>
    <ligand>
        <name>substrate</name>
    </ligand>
</feature>
<feature type="binding site" evidence="1">
    <location>
        <position position="180"/>
    </location>
    <ligand>
        <name>substrate</name>
    </ligand>
</feature>
<feature type="binding site" evidence="1">
    <location>
        <position position="191"/>
    </location>
    <ligand>
        <name>substrate</name>
    </ligand>
</feature>
<feature type="binding site" evidence="1">
    <location>
        <position position="277"/>
    </location>
    <ligand>
        <name>substrate</name>
    </ligand>
</feature>
<feature type="binding site" evidence="1">
    <location>
        <position position="408"/>
    </location>
    <ligand>
        <name>substrate</name>
    </ligand>
</feature>
<feature type="binding site" evidence="1">
    <location>
        <position position="413"/>
    </location>
    <ligand>
        <name>substrate</name>
    </ligand>
</feature>
<feature type="site" description="Involved in the stabilization of negative charge on the oxyanion by the formation of the oxyanion hole" evidence="1">
    <location>
        <position position="117"/>
    </location>
</feature>
<feature type="site" description="Involved in the stabilization of negative charge on the oxyanion by the formation of the oxyanion hole" evidence="1">
    <location>
        <position position="118"/>
    </location>
</feature>
<feature type="site" description="Cleavage; by autolysis" evidence="1">
    <location>
        <begin position="190"/>
        <end position="191"/>
    </location>
</feature>
<keyword id="KW-0012">Acyltransferase</keyword>
<keyword id="KW-0028">Amino-acid biosynthesis</keyword>
<keyword id="KW-0055">Arginine biosynthesis</keyword>
<keyword id="KW-0068">Autocatalytic cleavage</keyword>
<keyword id="KW-0963">Cytoplasm</keyword>
<keyword id="KW-0511">Multifunctional enzyme</keyword>
<keyword id="KW-1185">Reference proteome</keyword>
<keyword id="KW-0808">Transferase</keyword>
<comment type="function">
    <text evidence="1">Catalyzes two activities which are involved in the cyclic version of arginine biosynthesis: the synthesis of N-acetylglutamate from glutamate and acetyl-CoA as the acetyl donor, and of ornithine by transacetylation between N(2)-acetylornithine and glutamate.</text>
</comment>
<comment type="catalytic activity">
    <reaction evidence="1">
        <text>N(2)-acetyl-L-ornithine + L-glutamate = N-acetyl-L-glutamate + L-ornithine</text>
        <dbReference type="Rhea" id="RHEA:15349"/>
        <dbReference type="ChEBI" id="CHEBI:29985"/>
        <dbReference type="ChEBI" id="CHEBI:44337"/>
        <dbReference type="ChEBI" id="CHEBI:46911"/>
        <dbReference type="ChEBI" id="CHEBI:57805"/>
        <dbReference type="EC" id="2.3.1.35"/>
    </reaction>
</comment>
<comment type="catalytic activity">
    <reaction evidence="1">
        <text>L-glutamate + acetyl-CoA = N-acetyl-L-glutamate + CoA + H(+)</text>
        <dbReference type="Rhea" id="RHEA:24292"/>
        <dbReference type="ChEBI" id="CHEBI:15378"/>
        <dbReference type="ChEBI" id="CHEBI:29985"/>
        <dbReference type="ChEBI" id="CHEBI:44337"/>
        <dbReference type="ChEBI" id="CHEBI:57287"/>
        <dbReference type="ChEBI" id="CHEBI:57288"/>
        <dbReference type="EC" id="2.3.1.1"/>
    </reaction>
</comment>
<comment type="pathway">
    <text evidence="1">Amino-acid biosynthesis; L-arginine biosynthesis; L-ornithine and N-acetyl-L-glutamate from L-glutamate and N(2)-acetyl-L-ornithine (cyclic): step 1/1.</text>
</comment>
<comment type="pathway">
    <text evidence="1">Amino-acid biosynthesis; L-arginine biosynthesis; N(2)-acetyl-L-ornithine from L-glutamate: step 1/4.</text>
</comment>
<comment type="subunit">
    <text evidence="1">Heterotetramer of two alpha and two beta chains.</text>
</comment>
<comment type="subcellular location">
    <subcellularLocation>
        <location evidence="1">Cytoplasm</location>
    </subcellularLocation>
</comment>
<comment type="similarity">
    <text evidence="1">Belongs to the ArgJ family.</text>
</comment>
<organism>
    <name type="scientific">Nostoc sp. (strain PCC 7120 / SAG 25.82 / UTEX 2576)</name>
    <dbReference type="NCBI Taxonomy" id="103690"/>
    <lineage>
        <taxon>Bacteria</taxon>
        <taxon>Bacillati</taxon>
        <taxon>Cyanobacteriota</taxon>
        <taxon>Cyanophyceae</taxon>
        <taxon>Nostocales</taxon>
        <taxon>Nostocaceae</taxon>
        <taxon>Nostoc</taxon>
    </lineage>
</organism>
<gene>
    <name evidence="1" type="primary">argJ1</name>
    <name type="ordered locus">alr2073</name>
</gene>
<proteinExistence type="inferred from homology"/>
<reference key="1">
    <citation type="journal article" date="2001" name="DNA Res.">
        <title>Complete genomic sequence of the filamentous nitrogen-fixing cyanobacterium Anabaena sp. strain PCC 7120.</title>
        <authorList>
            <person name="Kaneko T."/>
            <person name="Nakamura Y."/>
            <person name="Wolk C.P."/>
            <person name="Kuritz T."/>
            <person name="Sasamoto S."/>
            <person name="Watanabe A."/>
            <person name="Iriguchi M."/>
            <person name="Ishikawa A."/>
            <person name="Kawashima K."/>
            <person name="Kimura T."/>
            <person name="Kishida Y."/>
            <person name="Kohara M."/>
            <person name="Matsumoto M."/>
            <person name="Matsuno A."/>
            <person name="Muraki A."/>
            <person name="Nakazaki N."/>
            <person name="Shimpo S."/>
            <person name="Sugimoto M."/>
            <person name="Takazawa M."/>
            <person name="Yamada M."/>
            <person name="Yasuda M."/>
            <person name="Tabata S."/>
        </authorList>
    </citation>
    <scope>NUCLEOTIDE SEQUENCE [LARGE SCALE GENOMIC DNA]</scope>
    <source>
        <strain>PCC 7120 / SAG 25.82 / UTEX 2576</strain>
    </source>
</reference>
<name>ARGJ1_NOSS1</name>
<protein>
    <recommendedName>
        <fullName evidence="1">Arginine biosynthesis bifunctional protein ArgJ 1</fullName>
    </recommendedName>
    <domain>
        <recommendedName>
            <fullName evidence="1">Glutamate N-acetyltransferase 1</fullName>
            <ecNumber evidence="1">2.3.1.35</ecNumber>
        </recommendedName>
        <alternativeName>
            <fullName evidence="1">Ornithine acetyltransferase 1</fullName>
            <shortName evidence="1">OATase 1</shortName>
        </alternativeName>
        <alternativeName>
            <fullName evidence="1">Ornithine transacetylase 1</fullName>
        </alternativeName>
    </domain>
    <domain>
        <recommendedName>
            <fullName evidence="1">Amino-acid acetyltransferase 1</fullName>
            <ecNumber evidence="1">2.3.1.1</ecNumber>
        </recommendedName>
        <alternativeName>
            <fullName evidence="1">N-acetylglutamate synthase 1</fullName>
            <shortName evidence="1">AGSase 1</shortName>
        </alternativeName>
    </domain>
    <component>
        <recommendedName>
            <fullName evidence="1">Arginine biosynthesis bifunctional protein ArgJ alpha chain 1</fullName>
        </recommendedName>
    </component>
    <component>
        <recommendedName>
            <fullName evidence="1">Arginine biosynthesis bifunctional protein ArgJ beta chain 1</fullName>
        </recommendedName>
    </component>
</protein>
<accession>Q8YVA8</accession>
<dbReference type="EC" id="2.3.1.35" evidence="1"/>
<dbReference type="EC" id="2.3.1.1" evidence="1"/>
<dbReference type="EMBL" id="BA000019">
    <property type="protein sequence ID" value="BAB73772.1"/>
    <property type="molecule type" value="Genomic_DNA"/>
</dbReference>
<dbReference type="PIR" id="AC2065">
    <property type="entry name" value="AC2065"/>
</dbReference>
<dbReference type="SMR" id="Q8YVA8"/>
<dbReference type="STRING" id="103690.gene:10494097"/>
<dbReference type="MEROPS" id="T05.002"/>
<dbReference type="KEGG" id="ana:alr2073"/>
<dbReference type="eggNOG" id="COG1364">
    <property type="taxonomic scope" value="Bacteria"/>
</dbReference>
<dbReference type="OrthoDB" id="9804242at2"/>
<dbReference type="UniPathway" id="UPA00068">
    <property type="reaction ID" value="UER00106"/>
</dbReference>
<dbReference type="UniPathway" id="UPA00068">
    <property type="reaction ID" value="UER00111"/>
</dbReference>
<dbReference type="Proteomes" id="UP000002483">
    <property type="component" value="Chromosome"/>
</dbReference>
<dbReference type="GO" id="GO:0005737">
    <property type="term" value="C:cytoplasm"/>
    <property type="evidence" value="ECO:0007669"/>
    <property type="project" value="UniProtKB-SubCell"/>
</dbReference>
<dbReference type="GO" id="GO:0004358">
    <property type="term" value="F:glutamate N-acetyltransferase activity"/>
    <property type="evidence" value="ECO:0007669"/>
    <property type="project" value="UniProtKB-UniRule"/>
</dbReference>
<dbReference type="GO" id="GO:0004042">
    <property type="term" value="F:L-glutamate N-acetyltransferase activity"/>
    <property type="evidence" value="ECO:0007669"/>
    <property type="project" value="UniProtKB-UniRule"/>
</dbReference>
<dbReference type="GO" id="GO:0006526">
    <property type="term" value="P:L-arginine biosynthetic process"/>
    <property type="evidence" value="ECO:0007669"/>
    <property type="project" value="UniProtKB-UniRule"/>
</dbReference>
<dbReference type="GO" id="GO:0006592">
    <property type="term" value="P:ornithine biosynthetic process"/>
    <property type="evidence" value="ECO:0007669"/>
    <property type="project" value="TreeGrafter"/>
</dbReference>
<dbReference type="CDD" id="cd02152">
    <property type="entry name" value="OAT"/>
    <property type="match status" value="1"/>
</dbReference>
<dbReference type="FunFam" id="3.10.20.340:FF:000001">
    <property type="entry name" value="Arginine biosynthesis bifunctional protein ArgJ, chloroplastic"/>
    <property type="match status" value="1"/>
</dbReference>
<dbReference type="FunFam" id="3.60.70.12:FF:000001">
    <property type="entry name" value="Arginine biosynthesis bifunctional protein ArgJ, chloroplastic"/>
    <property type="match status" value="1"/>
</dbReference>
<dbReference type="Gene3D" id="3.10.20.340">
    <property type="entry name" value="ArgJ beta chain, C-terminal domain"/>
    <property type="match status" value="1"/>
</dbReference>
<dbReference type="Gene3D" id="3.60.70.12">
    <property type="entry name" value="L-amino peptidase D-ALA esterase/amidase"/>
    <property type="match status" value="1"/>
</dbReference>
<dbReference type="HAMAP" id="MF_01106">
    <property type="entry name" value="ArgJ"/>
    <property type="match status" value="1"/>
</dbReference>
<dbReference type="InterPro" id="IPR002813">
    <property type="entry name" value="Arg_biosynth_ArgJ"/>
</dbReference>
<dbReference type="InterPro" id="IPR016117">
    <property type="entry name" value="ArgJ-like_dom_sf"/>
</dbReference>
<dbReference type="InterPro" id="IPR042195">
    <property type="entry name" value="ArgJ_beta_C"/>
</dbReference>
<dbReference type="NCBIfam" id="TIGR00120">
    <property type="entry name" value="ArgJ"/>
    <property type="match status" value="1"/>
</dbReference>
<dbReference type="NCBIfam" id="NF003802">
    <property type="entry name" value="PRK05388.1"/>
    <property type="match status" value="1"/>
</dbReference>
<dbReference type="PANTHER" id="PTHR23100">
    <property type="entry name" value="ARGININE BIOSYNTHESIS BIFUNCTIONAL PROTEIN ARGJ"/>
    <property type="match status" value="1"/>
</dbReference>
<dbReference type="PANTHER" id="PTHR23100:SF0">
    <property type="entry name" value="ARGININE BIOSYNTHESIS BIFUNCTIONAL PROTEIN ARGJ, MITOCHONDRIAL"/>
    <property type="match status" value="1"/>
</dbReference>
<dbReference type="Pfam" id="PF01960">
    <property type="entry name" value="ArgJ"/>
    <property type="match status" value="1"/>
</dbReference>
<dbReference type="SUPFAM" id="SSF56266">
    <property type="entry name" value="DmpA/ArgJ-like"/>
    <property type="match status" value="1"/>
</dbReference>
<evidence type="ECO:0000255" key="1">
    <source>
        <dbReference type="HAMAP-Rule" id="MF_01106"/>
    </source>
</evidence>
<sequence length="413" mass="42998">MADWQEITGGITAPKGYRAAGITAGLKPSGLPDLALIVSDVEAIASGVFTTSQVKAACVDYCRQRLQAKQSARAILCNAGQANAATGSQGIKDAEESAELLAKELNISPELILLASTGVIGQRIKMDALRNGIPKLIASLTDTGSDAAAGAIITTDLVTKSIALETTIGDRPVRIGGIAKGSGMIHPNMATMLAFVTCDAAVSSHLWQQMLTRAADRSFNSITVDGDTSTNDSLIALANGQSRTPAITEVGAESEKLEAMLTAVCQHLAKAIARDGEGATCLIEVQVTGAHDEQAARQIAKTIAGSSLVKSAIFGRDPNWGRIAAAAGRAGVPFEQENLQIQLGDFLLLDNGQPLPFDRAAASAYLKQAATGAYLQQDTVLISVKVGNGHGTGKAWGCDLSYDYVKINAEYTT</sequence>